<protein>
    <recommendedName>
        <fullName evidence="2">Elongation factor Tu</fullName>
        <shortName evidence="2">EF-Tu</shortName>
        <ecNumber evidence="2">3.6.5.3</ecNumber>
    </recommendedName>
</protein>
<reference key="1">
    <citation type="submission" date="2007-03" db="EMBL/GenBank/DDBJ databases">
        <title>Complete sequence of chromosome 1 of Burkholderia vietnamiensis G4.</title>
        <authorList>
            <consortium name="US DOE Joint Genome Institute"/>
            <person name="Copeland A."/>
            <person name="Lucas S."/>
            <person name="Lapidus A."/>
            <person name="Barry K."/>
            <person name="Detter J.C."/>
            <person name="Glavina del Rio T."/>
            <person name="Hammon N."/>
            <person name="Israni S."/>
            <person name="Dalin E."/>
            <person name="Tice H."/>
            <person name="Pitluck S."/>
            <person name="Chain P."/>
            <person name="Malfatti S."/>
            <person name="Shin M."/>
            <person name="Vergez L."/>
            <person name="Schmutz J."/>
            <person name="Larimer F."/>
            <person name="Land M."/>
            <person name="Hauser L."/>
            <person name="Kyrpides N."/>
            <person name="Tiedje J."/>
            <person name="Richardson P."/>
        </authorList>
    </citation>
    <scope>NUCLEOTIDE SEQUENCE [LARGE SCALE GENOMIC DNA]</scope>
    <source>
        <strain>G4 / LMG 22486</strain>
    </source>
</reference>
<feature type="chain" id="PRO_0000337347" description="Elongation factor Tu">
    <location>
        <begin position="1"/>
        <end position="396"/>
    </location>
</feature>
<feature type="domain" description="tr-type G">
    <location>
        <begin position="10"/>
        <end position="206"/>
    </location>
</feature>
<feature type="region of interest" description="G1" evidence="1">
    <location>
        <begin position="19"/>
        <end position="26"/>
    </location>
</feature>
<feature type="region of interest" description="G2" evidence="1">
    <location>
        <begin position="60"/>
        <end position="64"/>
    </location>
</feature>
<feature type="region of interest" description="G3" evidence="1">
    <location>
        <begin position="81"/>
        <end position="84"/>
    </location>
</feature>
<feature type="region of interest" description="G4" evidence="1">
    <location>
        <begin position="136"/>
        <end position="139"/>
    </location>
</feature>
<feature type="region of interest" description="G5" evidence="1">
    <location>
        <begin position="174"/>
        <end position="176"/>
    </location>
</feature>
<feature type="binding site" evidence="2">
    <location>
        <begin position="19"/>
        <end position="26"/>
    </location>
    <ligand>
        <name>GTP</name>
        <dbReference type="ChEBI" id="CHEBI:37565"/>
    </ligand>
</feature>
<feature type="binding site" evidence="2">
    <location>
        <position position="26"/>
    </location>
    <ligand>
        <name>Mg(2+)</name>
        <dbReference type="ChEBI" id="CHEBI:18420"/>
    </ligand>
</feature>
<feature type="binding site" evidence="2">
    <location>
        <begin position="81"/>
        <end position="85"/>
    </location>
    <ligand>
        <name>GTP</name>
        <dbReference type="ChEBI" id="CHEBI:37565"/>
    </ligand>
</feature>
<feature type="binding site" evidence="2">
    <location>
        <begin position="136"/>
        <end position="139"/>
    </location>
    <ligand>
        <name>GTP</name>
        <dbReference type="ChEBI" id="CHEBI:37565"/>
    </ligand>
</feature>
<accession>A4JAM5</accession>
<gene>
    <name evidence="2" type="primary">tuf1</name>
    <name type="ordered locus">Bcep1808_0315</name>
</gene>
<gene>
    <name evidence="2" type="primary">tuf2</name>
    <name type="ordered locus">Bcep1808_0328</name>
</gene>
<sequence>MAKEKFERTKPHVNVGTIGHVDHGKTTLTAAITTVLTKKFGGEAKAYDQIDAAPEEKARGITINTAHVEYETANRHYAHVDCPGHADYVKNMITGAAQMDGAILVCSAADGPMPQTREHILLARQVGVPYIIVFLNKCDMVDDAELLELVEMEVRELLSKYDFPGDDTPIVKGSAKLALEGDTGELGEVAIMNLADALDTYIPTPERAVDGAFLMPVEDVFSISGRGTVVTGRVERGIVKVGEEIEIVGIKPTVKTTCTGVEMFRKLLDQGQAGDNVGILLRGTKREDVERGQVLAKPGSITPHTHFTAEVYVLSKDEGGRHTPFFNNYRPQFYFRTTDVTGSIELPKDKEMVMPGDNVSITVKLIAPIAMEEGLRFAIREGGRTVGAGVVAKIIE</sequence>
<keyword id="KW-0963">Cytoplasm</keyword>
<keyword id="KW-0251">Elongation factor</keyword>
<keyword id="KW-0342">GTP-binding</keyword>
<keyword id="KW-0378">Hydrolase</keyword>
<keyword id="KW-0460">Magnesium</keyword>
<keyword id="KW-0479">Metal-binding</keyword>
<keyword id="KW-0547">Nucleotide-binding</keyword>
<keyword id="KW-0648">Protein biosynthesis</keyword>
<evidence type="ECO:0000250" key="1"/>
<evidence type="ECO:0000255" key="2">
    <source>
        <dbReference type="HAMAP-Rule" id="MF_00118"/>
    </source>
</evidence>
<name>EFTU_BURVG</name>
<dbReference type="EC" id="3.6.5.3" evidence="2"/>
<dbReference type="EMBL" id="CP000614">
    <property type="protein sequence ID" value="ABO53328.1"/>
    <property type="molecule type" value="Genomic_DNA"/>
</dbReference>
<dbReference type="EMBL" id="CP000614">
    <property type="protein sequence ID" value="ABO53341.1"/>
    <property type="molecule type" value="Genomic_DNA"/>
</dbReference>
<dbReference type="SMR" id="A4JAM5"/>
<dbReference type="KEGG" id="bvi:Bcep1808_0315"/>
<dbReference type="KEGG" id="bvi:Bcep1808_0328"/>
<dbReference type="eggNOG" id="COG0050">
    <property type="taxonomic scope" value="Bacteria"/>
</dbReference>
<dbReference type="HOGENOM" id="CLU_007265_0_0_4"/>
<dbReference type="Proteomes" id="UP000002287">
    <property type="component" value="Chromosome 1"/>
</dbReference>
<dbReference type="GO" id="GO:0005829">
    <property type="term" value="C:cytosol"/>
    <property type="evidence" value="ECO:0007669"/>
    <property type="project" value="TreeGrafter"/>
</dbReference>
<dbReference type="GO" id="GO:0005525">
    <property type="term" value="F:GTP binding"/>
    <property type="evidence" value="ECO:0007669"/>
    <property type="project" value="UniProtKB-UniRule"/>
</dbReference>
<dbReference type="GO" id="GO:0003924">
    <property type="term" value="F:GTPase activity"/>
    <property type="evidence" value="ECO:0007669"/>
    <property type="project" value="InterPro"/>
</dbReference>
<dbReference type="GO" id="GO:0097216">
    <property type="term" value="F:guanosine tetraphosphate binding"/>
    <property type="evidence" value="ECO:0007669"/>
    <property type="project" value="UniProtKB-ARBA"/>
</dbReference>
<dbReference type="GO" id="GO:0003746">
    <property type="term" value="F:translation elongation factor activity"/>
    <property type="evidence" value="ECO:0007669"/>
    <property type="project" value="UniProtKB-UniRule"/>
</dbReference>
<dbReference type="CDD" id="cd01884">
    <property type="entry name" value="EF_Tu"/>
    <property type="match status" value="1"/>
</dbReference>
<dbReference type="CDD" id="cd03697">
    <property type="entry name" value="EFTU_II"/>
    <property type="match status" value="1"/>
</dbReference>
<dbReference type="CDD" id="cd03707">
    <property type="entry name" value="EFTU_III"/>
    <property type="match status" value="1"/>
</dbReference>
<dbReference type="FunFam" id="2.40.30.10:FF:000001">
    <property type="entry name" value="Elongation factor Tu"/>
    <property type="match status" value="1"/>
</dbReference>
<dbReference type="FunFam" id="3.40.50.300:FF:000003">
    <property type="entry name" value="Elongation factor Tu"/>
    <property type="match status" value="1"/>
</dbReference>
<dbReference type="Gene3D" id="3.40.50.300">
    <property type="entry name" value="P-loop containing nucleotide triphosphate hydrolases"/>
    <property type="match status" value="1"/>
</dbReference>
<dbReference type="Gene3D" id="2.40.30.10">
    <property type="entry name" value="Translation factors"/>
    <property type="match status" value="2"/>
</dbReference>
<dbReference type="HAMAP" id="MF_00118_B">
    <property type="entry name" value="EF_Tu_B"/>
    <property type="match status" value="1"/>
</dbReference>
<dbReference type="InterPro" id="IPR041709">
    <property type="entry name" value="EF-Tu_GTP-bd"/>
</dbReference>
<dbReference type="InterPro" id="IPR050055">
    <property type="entry name" value="EF-Tu_GTPase"/>
</dbReference>
<dbReference type="InterPro" id="IPR004161">
    <property type="entry name" value="EFTu-like_2"/>
</dbReference>
<dbReference type="InterPro" id="IPR033720">
    <property type="entry name" value="EFTU_2"/>
</dbReference>
<dbReference type="InterPro" id="IPR031157">
    <property type="entry name" value="G_TR_CS"/>
</dbReference>
<dbReference type="InterPro" id="IPR027417">
    <property type="entry name" value="P-loop_NTPase"/>
</dbReference>
<dbReference type="InterPro" id="IPR005225">
    <property type="entry name" value="Small_GTP-bd"/>
</dbReference>
<dbReference type="InterPro" id="IPR000795">
    <property type="entry name" value="T_Tr_GTP-bd_dom"/>
</dbReference>
<dbReference type="InterPro" id="IPR009000">
    <property type="entry name" value="Transl_B-barrel_sf"/>
</dbReference>
<dbReference type="InterPro" id="IPR009001">
    <property type="entry name" value="Transl_elong_EF1A/Init_IF2_C"/>
</dbReference>
<dbReference type="InterPro" id="IPR004541">
    <property type="entry name" value="Transl_elong_EFTu/EF1A_bac/org"/>
</dbReference>
<dbReference type="InterPro" id="IPR004160">
    <property type="entry name" value="Transl_elong_EFTu/EF1A_C"/>
</dbReference>
<dbReference type="NCBIfam" id="TIGR00485">
    <property type="entry name" value="EF-Tu"/>
    <property type="match status" value="1"/>
</dbReference>
<dbReference type="NCBIfam" id="NF000766">
    <property type="entry name" value="PRK00049.1"/>
    <property type="match status" value="1"/>
</dbReference>
<dbReference type="NCBIfam" id="NF009372">
    <property type="entry name" value="PRK12735.1"/>
    <property type="match status" value="1"/>
</dbReference>
<dbReference type="NCBIfam" id="NF009373">
    <property type="entry name" value="PRK12736.1"/>
    <property type="match status" value="1"/>
</dbReference>
<dbReference type="NCBIfam" id="TIGR00231">
    <property type="entry name" value="small_GTP"/>
    <property type="match status" value="1"/>
</dbReference>
<dbReference type="PANTHER" id="PTHR43721:SF22">
    <property type="entry name" value="ELONGATION FACTOR TU, MITOCHONDRIAL"/>
    <property type="match status" value="1"/>
</dbReference>
<dbReference type="PANTHER" id="PTHR43721">
    <property type="entry name" value="ELONGATION FACTOR TU-RELATED"/>
    <property type="match status" value="1"/>
</dbReference>
<dbReference type="Pfam" id="PF00009">
    <property type="entry name" value="GTP_EFTU"/>
    <property type="match status" value="1"/>
</dbReference>
<dbReference type="Pfam" id="PF03144">
    <property type="entry name" value="GTP_EFTU_D2"/>
    <property type="match status" value="1"/>
</dbReference>
<dbReference type="Pfam" id="PF03143">
    <property type="entry name" value="GTP_EFTU_D3"/>
    <property type="match status" value="1"/>
</dbReference>
<dbReference type="PRINTS" id="PR00315">
    <property type="entry name" value="ELONGATNFCT"/>
</dbReference>
<dbReference type="SUPFAM" id="SSF50465">
    <property type="entry name" value="EF-Tu/eEF-1alpha/eIF2-gamma C-terminal domain"/>
    <property type="match status" value="1"/>
</dbReference>
<dbReference type="SUPFAM" id="SSF52540">
    <property type="entry name" value="P-loop containing nucleoside triphosphate hydrolases"/>
    <property type="match status" value="1"/>
</dbReference>
<dbReference type="SUPFAM" id="SSF50447">
    <property type="entry name" value="Translation proteins"/>
    <property type="match status" value="1"/>
</dbReference>
<dbReference type="PROSITE" id="PS00301">
    <property type="entry name" value="G_TR_1"/>
    <property type="match status" value="1"/>
</dbReference>
<dbReference type="PROSITE" id="PS51722">
    <property type="entry name" value="G_TR_2"/>
    <property type="match status" value="1"/>
</dbReference>
<comment type="function">
    <text evidence="2">GTP hydrolase that promotes the GTP-dependent binding of aminoacyl-tRNA to the A-site of ribosomes during protein biosynthesis.</text>
</comment>
<comment type="catalytic activity">
    <reaction evidence="2">
        <text>GTP + H2O = GDP + phosphate + H(+)</text>
        <dbReference type="Rhea" id="RHEA:19669"/>
        <dbReference type="ChEBI" id="CHEBI:15377"/>
        <dbReference type="ChEBI" id="CHEBI:15378"/>
        <dbReference type="ChEBI" id="CHEBI:37565"/>
        <dbReference type="ChEBI" id="CHEBI:43474"/>
        <dbReference type="ChEBI" id="CHEBI:58189"/>
        <dbReference type="EC" id="3.6.5.3"/>
    </reaction>
    <physiologicalReaction direction="left-to-right" evidence="2">
        <dbReference type="Rhea" id="RHEA:19670"/>
    </physiologicalReaction>
</comment>
<comment type="subunit">
    <text evidence="2">Monomer.</text>
</comment>
<comment type="subcellular location">
    <subcellularLocation>
        <location evidence="2">Cytoplasm</location>
    </subcellularLocation>
</comment>
<comment type="similarity">
    <text evidence="2">Belongs to the TRAFAC class translation factor GTPase superfamily. Classic translation factor GTPase family. EF-Tu/EF-1A subfamily.</text>
</comment>
<proteinExistence type="inferred from homology"/>
<organism>
    <name type="scientific">Burkholderia vietnamiensis (strain G4 / LMG 22486)</name>
    <name type="common">Burkholderia cepacia (strain R1808)</name>
    <dbReference type="NCBI Taxonomy" id="269482"/>
    <lineage>
        <taxon>Bacteria</taxon>
        <taxon>Pseudomonadati</taxon>
        <taxon>Pseudomonadota</taxon>
        <taxon>Betaproteobacteria</taxon>
        <taxon>Burkholderiales</taxon>
        <taxon>Burkholderiaceae</taxon>
        <taxon>Burkholderia</taxon>
        <taxon>Burkholderia cepacia complex</taxon>
    </lineage>
</organism>